<gene>
    <name evidence="1" type="primary">tyrS</name>
    <name type="ordered locus">Krad_3153</name>
</gene>
<comment type="function">
    <text evidence="1">Catalyzes the attachment of tyrosine to tRNA(Tyr) in a two-step reaction: tyrosine is first activated by ATP to form Tyr-AMP and then transferred to the acceptor end of tRNA(Tyr).</text>
</comment>
<comment type="catalytic activity">
    <reaction evidence="1">
        <text>tRNA(Tyr) + L-tyrosine + ATP = L-tyrosyl-tRNA(Tyr) + AMP + diphosphate + H(+)</text>
        <dbReference type="Rhea" id="RHEA:10220"/>
        <dbReference type="Rhea" id="RHEA-COMP:9706"/>
        <dbReference type="Rhea" id="RHEA-COMP:9707"/>
        <dbReference type="ChEBI" id="CHEBI:15378"/>
        <dbReference type="ChEBI" id="CHEBI:30616"/>
        <dbReference type="ChEBI" id="CHEBI:33019"/>
        <dbReference type="ChEBI" id="CHEBI:58315"/>
        <dbReference type="ChEBI" id="CHEBI:78442"/>
        <dbReference type="ChEBI" id="CHEBI:78536"/>
        <dbReference type="ChEBI" id="CHEBI:456215"/>
        <dbReference type="EC" id="6.1.1.1"/>
    </reaction>
</comment>
<comment type="subunit">
    <text evidence="1">Homodimer.</text>
</comment>
<comment type="subcellular location">
    <subcellularLocation>
        <location evidence="1">Cytoplasm</location>
    </subcellularLocation>
</comment>
<comment type="similarity">
    <text evidence="1">Belongs to the class-I aminoacyl-tRNA synthetase family. TyrS type 1 subfamily.</text>
</comment>
<reference key="1">
    <citation type="journal article" date="2008" name="PLoS ONE">
        <title>Survival in nuclear waste, extreme resistance, and potential applications gleaned from the genome sequence of Kineococcus radiotolerans SRS30216.</title>
        <authorList>
            <person name="Bagwell C.E."/>
            <person name="Bhat S."/>
            <person name="Hawkins G.M."/>
            <person name="Smith B.W."/>
            <person name="Biswas T."/>
            <person name="Hoover T.R."/>
            <person name="Saunders E."/>
            <person name="Han C.S."/>
            <person name="Tsodikov O.V."/>
            <person name="Shimkets L.J."/>
        </authorList>
    </citation>
    <scope>NUCLEOTIDE SEQUENCE [LARGE SCALE GENOMIC DNA]</scope>
    <source>
        <strain>ATCC BAA-149 / DSM 14245 / SRS30216</strain>
    </source>
</reference>
<proteinExistence type="inferred from homology"/>
<name>SYY_KINRD</name>
<feature type="chain" id="PRO_1000088593" description="Tyrosine--tRNA ligase">
    <location>
        <begin position="1"/>
        <end position="422"/>
    </location>
</feature>
<feature type="domain" description="S4 RNA-binding" evidence="1">
    <location>
        <begin position="352"/>
        <end position="418"/>
    </location>
</feature>
<feature type="short sequence motif" description="'HIGH' region">
    <location>
        <begin position="40"/>
        <end position="49"/>
    </location>
</feature>
<feature type="short sequence motif" description="'KMSKS' region">
    <location>
        <begin position="229"/>
        <end position="233"/>
    </location>
</feature>
<feature type="binding site" evidence="1">
    <location>
        <position position="35"/>
    </location>
    <ligand>
        <name>L-tyrosine</name>
        <dbReference type="ChEBI" id="CHEBI:58315"/>
    </ligand>
</feature>
<feature type="binding site" evidence="1">
    <location>
        <position position="169"/>
    </location>
    <ligand>
        <name>L-tyrosine</name>
        <dbReference type="ChEBI" id="CHEBI:58315"/>
    </ligand>
</feature>
<feature type="binding site" evidence="1">
    <location>
        <position position="173"/>
    </location>
    <ligand>
        <name>L-tyrosine</name>
        <dbReference type="ChEBI" id="CHEBI:58315"/>
    </ligand>
</feature>
<feature type="binding site" evidence="1">
    <location>
        <position position="232"/>
    </location>
    <ligand>
        <name>ATP</name>
        <dbReference type="ChEBI" id="CHEBI:30616"/>
    </ligand>
</feature>
<accession>A6WCS8</accession>
<dbReference type="EC" id="6.1.1.1" evidence="1"/>
<dbReference type="EMBL" id="CP000750">
    <property type="protein sequence ID" value="ABS04617.1"/>
    <property type="molecule type" value="Genomic_DNA"/>
</dbReference>
<dbReference type="RefSeq" id="WP_012087130.1">
    <property type="nucleotide sequence ID" value="NC_009664.2"/>
</dbReference>
<dbReference type="SMR" id="A6WCS8"/>
<dbReference type="STRING" id="266940.Krad_3153"/>
<dbReference type="KEGG" id="kra:Krad_3153"/>
<dbReference type="eggNOG" id="COG0162">
    <property type="taxonomic scope" value="Bacteria"/>
</dbReference>
<dbReference type="HOGENOM" id="CLU_024003_0_3_11"/>
<dbReference type="OrthoDB" id="9804243at2"/>
<dbReference type="Proteomes" id="UP000001116">
    <property type="component" value="Chromosome"/>
</dbReference>
<dbReference type="GO" id="GO:0005829">
    <property type="term" value="C:cytosol"/>
    <property type="evidence" value="ECO:0007669"/>
    <property type="project" value="TreeGrafter"/>
</dbReference>
<dbReference type="GO" id="GO:0005524">
    <property type="term" value="F:ATP binding"/>
    <property type="evidence" value="ECO:0007669"/>
    <property type="project" value="UniProtKB-UniRule"/>
</dbReference>
<dbReference type="GO" id="GO:0003723">
    <property type="term" value="F:RNA binding"/>
    <property type="evidence" value="ECO:0007669"/>
    <property type="project" value="UniProtKB-KW"/>
</dbReference>
<dbReference type="GO" id="GO:0004831">
    <property type="term" value="F:tyrosine-tRNA ligase activity"/>
    <property type="evidence" value="ECO:0007669"/>
    <property type="project" value="UniProtKB-UniRule"/>
</dbReference>
<dbReference type="GO" id="GO:0006437">
    <property type="term" value="P:tyrosyl-tRNA aminoacylation"/>
    <property type="evidence" value="ECO:0007669"/>
    <property type="project" value="UniProtKB-UniRule"/>
</dbReference>
<dbReference type="CDD" id="cd00165">
    <property type="entry name" value="S4"/>
    <property type="match status" value="1"/>
</dbReference>
<dbReference type="CDD" id="cd00805">
    <property type="entry name" value="TyrRS_core"/>
    <property type="match status" value="1"/>
</dbReference>
<dbReference type="FunFam" id="1.10.240.10:FF:000001">
    <property type="entry name" value="Tyrosine--tRNA ligase"/>
    <property type="match status" value="1"/>
</dbReference>
<dbReference type="FunFam" id="3.40.50.620:FF:000008">
    <property type="entry name" value="Tyrosine--tRNA ligase"/>
    <property type="match status" value="1"/>
</dbReference>
<dbReference type="Gene3D" id="3.40.50.620">
    <property type="entry name" value="HUPs"/>
    <property type="match status" value="1"/>
</dbReference>
<dbReference type="Gene3D" id="3.10.290.10">
    <property type="entry name" value="RNA-binding S4 domain"/>
    <property type="match status" value="1"/>
</dbReference>
<dbReference type="Gene3D" id="1.10.240.10">
    <property type="entry name" value="Tyrosyl-Transfer RNA Synthetase"/>
    <property type="match status" value="1"/>
</dbReference>
<dbReference type="HAMAP" id="MF_02006">
    <property type="entry name" value="Tyr_tRNA_synth_type1"/>
    <property type="match status" value="1"/>
</dbReference>
<dbReference type="InterPro" id="IPR001412">
    <property type="entry name" value="aa-tRNA-synth_I_CS"/>
</dbReference>
<dbReference type="InterPro" id="IPR002305">
    <property type="entry name" value="aa-tRNA-synth_Ic"/>
</dbReference>
<dbReference type="InterPro" id="IPR014729">
    <property type="entry name" value="Rossmann-like_a/b/a_fold"/>
</dbReference>
<dbReference type="InterPro" id="IPR036986">
    <property type="entry name" value="S4_RNA-bd_sf"/>
</dbReference>
<dbReference type="InterPro" id="IPR054608">
    <property type="entry name" value="SYY-like_C"/>
</dbReference>
<dbReference type="InterPro" id="IPR002307">
    <property type="entry name" value="Tyr-tRNA-ligase"/>
</dbReference>
<dbReference type="InterPro" id="IPR024088">
    <property type="entry name" value="Tyr-tRNA-ligase_bac-type"/>
</dbReference>
<dbReference type="InterPro" id="IPR024107">
    <property type="entry name" value="Tyr-tRNA-ligase_bac_1"/>
</dbReference>
<dbReference type="NCBIfam" id="TIGR00234">
    <property type="entry name" value="tyrS"/>
    <property type="match status" value="1"/>
</dbReference>
<dbReference type="PANTHER" id="PTHR11766:SF0">
    <property type="entry name" value="TYROSINE--TRNA LIGASE, MITOCHONDRIAL"/>
    <property type="match status" value="1"/>
</dbReference>
<dbReference type="PANTHER" id="PTHR11766">
    <property type="entry name" value="TYROSYL-TRNA SYNTHETASE"/>
    <property type="match status" value="1"/>
</dbReference>
<dbReference type="Pfam" id="PF22421">
    <property type="entry name" value="SYY_C-terminal"/>
    <property type="match status" value="1"/>
</dbReference>
<dbReference type="Pfam" id="PF00579">
    <property type="entry name" value="tRNA-synt_1b"/>
    <property type="match status" value="1"/>
</dbReference>
<dbReference type="PRINTS" id="PR01040">
    <property type="entry name" value="TRNASYNTHTYR"/>
</dbReference>
<dbReference type="SUPFAM" id="SSF55174">
    <property type="entry name" value="Alpha-L RNA-binding motif"/>
    <property type="match status" value="1"/>
</dbReference>
<dbReference type="SUPFAM" id="SSF52374">
    <property type="entry name" value="Nucleotidylyl transferase"/>
    <property type="match status" value="1"/>
</dbReference>
<dbReference type="PROSITE" id="PS00178">
    <property type="entry name" value="AA_TRNA_LIGASE_I"/>
    <property type="match status" value="1"/>
</dbReference>
<dbReference type="PROSITE" id="PS50889">
    <property type="entry name" value="S4"/>
    <property type="match status" value="1"/>
</dbReference>
<sequence length="422" mass="45783">MNDVWDELQWRGLVAHSTDEAALQEALQTGPLTYYVGFDPTAASLHVGHLVQVLTAKRLQQAGHRPLILVGGATGLVGDPRPSAERTMNDPSVVAGWVTGLQGQIAPFLDFDGPAAATMVNNLDWTQSMSTIEFLRDVGKHFSVNRMLDREAVSKRLATTGISFTEFSYVLLQSNDYLQLHRRHGCTLQLGGSDQWGNITAGCELVRRVDQRTVHALATPLLTKADGTKFGKTESGAVWLDPELTSPYAFHQFWLNAEDAKVVDYLKAFSFRPREEIEELGRQAVENPRARAAQRALAHEVTALVHGEEAAVAVEAAAAALFGGSDLEAIDERILRGALAELPTAAPADRDVRLAQLFADTGLAPSLSGARRTIGEGGAYVNNIKLTDPEATLRDVQLLHGRYAVLRRGKKSLASVAVPLPQ</sequence>
<keyword id="KW-0030">Aminoacyl-tRNA synthetase</keyword>
<keyword id="KW-0067">ATP-binding</keyword>
<keyword id="KW-0963">Cytoplasm</keyword>
<keyword id="KW-0436">Ligase</keyword>
<keyword id="KW-0547">Nucleotide-binding</keyword>
<keyword id="KW-0648">Protein biosynthesis</keyword>
<keyword id="KW-1185">Reference proteome</keyword>
<keyword id="KW-0694">RNA-binding</keyword>
<evidence type="ECO:0000255" key="1">
    <source>
        <dbReference type="HAMAP-Rule" id="MF_02006"/>
    </source>
</evidence>
<organism>
    <name type="scientific">Kineococcus radiotolerans (strain ATCC BAA-149 / DSM 14245 / SRS30216)</name>
    <dbReference type="NCBI Taxonomy" id="266940"/>
    <lineage>
        <taxon>Bacteria</taxon>
        <taxon>Bacillati</taxon>
        <taxon>Actinomycetota</taxon>
        <taxon>Actinomycetes</taxon>
        <taxon>Kineosporiales</taxon>
        <taxon>Kineosporiaceae</taxon>
        <taxon>Kineococcus</taxon>
    </lineage>
</organism>
<protein>
    <recommendedName>
        <fullName evidence="1">Tyrosine--tRNA ligase</fullName>
        <ecNumber evidence="1">6.1.1.1</ecNumber>
    </recommendedName>
    <alternativeName>
        <fullName evidence="1">Tyrosyl-tRNA synthetase</fullName>
        <shortName evidence="1">TyrRS</shortName>
    </alternativeName>
</protein>